<name>FRDA_HAEIN</name>
<reference key="1">
    <citation type="journal article" date="1995" name="Science">
        <title>Whole-genome random sequencing and assembly of Haemophilus influenzae Rd.</title>
        <authorList>
            <person name="Fleischmann R.D."/>
            <person name="Adams M.D."/>
            <person name="White O."/>
            <person name="Clayton R.A."/>
            <person name="Kirkness E.F."/>
            <person name="Kerlavage A.R."/>
            <person name="Bult C.J."/>
            <person name="Tomb J.-F."/>
            <person name="Dougherty B.A."/>
            <person name="Merrick J.M."/>
            <person name="McKenney K."/>
            <person name="Sutton G.G."/>
            <person name="FitzHugh W."/>
            <person name="Fields C.A."/>
            <person name="Gocayne J.D."/>
            <person name="Scott J.D."/>
            <person name="Shirley R."/>
            <person name="Liu L.-I."/>
            <person name="Glodek A."/>
            <person name="Kelley J.M."/>
            <person name="Weidman J.F."/>
            <person name="Phillips C.A."/>
            <person name="Spriggs T."/>
            <person name="Hedblom E."/>
            <person name="Cotton M.D."/>
            <person name="Utterback T.R."/>
            <person name="Hanna M.C."/>
            <person name="Nguyen D.T."/>
            <person name="Saudek D.M."/>
            <person name="Brandon R.C."/>
            <person name="Fine L.D."/>
            <person name="Fritchman J.L."/>
            <person name="Fuhrmann J.L."/>
            <person name="Geoghagen N.S.M."/>
            <person name="Gnehm C.L."/>
            <person name="McDonald L.A."/>
            <person name="Small K.V."/>
            <person name="Fraser C.M."/>
            <person name="Smith H.O."/>
            <person name="Venter J.C."/>
        </authorList>
    </citation>
    <scope>NUCLEOTIDE SEQUENCE [LARGE SCALE GENOMIC DNA]</scope>
    <source>
        <strain>ATCC 51907 / DSM 11121 / KW20 / Rd</strain>
    </source>
</reference>
<evidence type="ECO:0000250" key="1">
    <source>
        <dbReference type="UniProtKB" id="P00363"/>
    </source>
</evidence>
<evidence type="ECO:0000305" key="2"/>
<comment type="catalytic activity">
    <reaction evidence="1">
        <text>a quinone + succinate = fumarate + a quinol</text>
        <dbReference type="Rhea" id="RHEA:40523"/>
        <dbReference type="ChEBI" id="CHEBI:24646"/>
        <dbReference type="ChEBI" id="CHEBI:29806"/>
        <dbReference type="ChEBI" id="CHEBI:30031"/>
        <dbReference type="ChEBI" id="CHEBI:132124"/>
        <dbReference type="EC" id="1.3.5.1"/>
    </reaction>
</comment>
<comment type="catalytic activity">
    <reaction evidence="1">
        <text>a menaquinone + succinate = a menaquinol + fumarate</text>
        <dbReference type="Rhea" id="RHEA:27834"/>
        <dbReference type="Rhea" id="RHEA-COMP:9537"/>
        <dbReference type="Rhea" id="RHEA-COMP:9539"/>
        <dbReference type="ChEBI" id="CHEBI:16374"/>
        <dbReference type="ChEBI" id="CHEBI:18151"/>
        <dbReference type="ChEBI" id="CHEBI:29806"/>
        <dbReference type="ChEBI" id="CHEBI:30031"/>
        <dbReference type="EC" id="1.3.5.1"/>
    </reaction>
</comment>
<comment type="cofactor">
    <cofactor evidence="1">
        <name>FAD</name>
        <dbReference type="ChEBI" id="CHEBI:57692"/>
    </cofactor>
    <text evidence="1">Binds 1 FAD covalently per subunit.</text>
</comment>
<comment type="subunit">
    <text evidence="1">Part of an enzyme complex containing four subunits: a flavoprotein (FrdA), an iron-sulfur protein (FrdB), and two hydrophobic anchor proteins (FrdC and FrdD).</text>
</comment>
<comment type="subcellular location">
    <subcellularLocation>
        <location evidence="1">Cell inner membrane</location>
        <topology evidence="1">Peripheral membrane protein</topology>
        <orientation evidence="1">Cytoplasmic side</orientation>
    </subcellularLocation>
</comment>
<comment type="similarity">
    <text evidence="2">Belongs to the FAD-dependent oxidoreductase 2 family. FRD/SDH subfamily.</text>
</comment>
<keyword id="KW-0997">Cell inner membrane</keyword>
<keyword id="KW-1003">Cell membrane</keyword>
<keyword id="KW-0249">Electron transport</keyword>
<keyword id="KW-0274">FAD</keyword>
<keyword id="KW-0285">Flavoprotein</keyword>
<keyword id="KW-0472">Membrane</keyword>
<keyword id="KW-0547">Nucleotide-binding</keyword>
<keyword id="KW-0560">Oxidoreductase</keyword>
<keyword id="KW-1185">Reference proteome</keyword>
<keyword id="KW-0813">Transport</keyword>
<accession>P44894</accession>
<gene>
    <name type="primary">frdA</name>
    <name type="ordered locus">HI_0835</name>
</gene>
<dbReference type="EC" id="1.3.5.1" evidence="1"/>
<dbReference type="EMBL" id="L42023">
    <property type="protein sequence ID" value="AAC22493.1"/>
    <property type="molecule type" value="Genomic_DNA"/>
</dbReference>
<dbReference type="PIR" id="H64097">
    <property type="entry name" value="H64097"/>
</dbReference>
<dbReference type="RefSeq" id="NP_438995.1">
    <property type="nucleotide sequence ID" value="NC_000907.1"/>
</dbReference>
<dbReference type="SMR" id="P44894"/>
<dbReference type="STRING" id="71421.HI_0835"/>
<dbReference type="EnsemblBacteria" id="AAC22493">
    <property type="protein sequence ID" value="AAC22493"/>
    <property type="gene ID" value="HI_0835"/>
</dbReference>
<dbReference type="KEGG" id="hin:HI_0835"/>
<dbReference type="PATRIC" id="fig|71421.8.peg.876"/>
<dbReference type="eggNOG" id="COG1053">
    <property type="taxonomic scope" value="Bacteria"/>
</dbReference>
<dbReference type="HOGENOM" id="CLU_014312_6_2_6"/>
<dbReference type="OrthoDB" id="9806724at2"/>
<dbReference type="PhylomeDB" id="P44894"/>
<dbReference type="BioCyc" id="HINF71421:G1GJ1-876-MONOMER"/>
<dbReference type="Proteomes" id="UP000000579">
    <property type="component" value="Chromosome"/>
</dbReference>
<dbReference type="GO" id="GO:0045283">
    <property type="term" value="C:fumarate reductase complex"/>
    <property type="evidence" value="ECO:0000318"/>
    <property type="project" value="GO_Central"/>
</dbReference>
<dbReference type="GO" id="GO:0005886">
    <property type="term" value="C:plasma membrane"/>
    <property type="evidence" value="ECO:0000318"/>
    <property type="project" value="GO_Central"/>
</dbReference>
<dbReference type="GO" id="GO:0009055">
    <property type="term" value="F:electron transfer activity"/>
    <property type="evidence" value="ECO:0000318"/>
    <property type="project" value="GO_Central"/>
</dbReference>
<dbReference type="GO" id="GO:0050660">
    <property type="term" value="F:flavin adenine dinucleotide binding"/>
    <property type="evidence" value="ECO:0000318"/>
    <property type="project" value="GO_Central"/>
</dbReference>
<dbReference type="GO" id="GO:0008177">
    <property type="term" value="F:succinate dehydrogenase (quinone) activity"/>
    <property type="evidence" value="ECO:0007669"/>
    <property type="project" value="RHEA"/>
</dbReference>
<dbReference type="GO" id="GO:0000104">
    <property type="term" value="F:succinate dehydrogenase activity"/>
    <property type="evidence" value="ECO:0000318"/>
    <property type="project" value="GO_Central"/>
</dbReference>
<dbReference type="GO" id="GO:0009061">
    <property type="term" value="P:anaerobic respiration"/>
    <property type="evidence" value="ECO:0000318"/>
    <property type="project" value="GO_Central"/>
</dbReference>
<dbReference type="GO" id="GO:0022900">
    <property type="term" value="P:electron transport chain"/>
    <property type="evidence" value="ECO:0007669"/>
    <property type="project" value="InterPro"/>
</dbReference>
<dbReference type="GO" id="GO:0006113">
    <property type="term" value="P:fermentation"/>
    <property type="evidence" value="ECO:0000318"/>
    <property type="project" value="GO_Central"/>
</dbReference>
<dbReference type="FunFam" id="3.50.50.60:FF:000017">
    <property type="entry name" value="Fumarate reductase flavoprotein subunit"/>
    <property type="match status" value="1"/>
</dbReference>
<dbReference type="FunFam" id="3.90.700.10:FF:000003">
    <property type="entry name" value="Fumarate reductase flavoprotein subunit"/>
    <property type="match status" value="1"/>
</dbReference>
<dbReference type="FunFam" id="4.10.80.40:FF:000003">
    <property type="entry name" value="Fumarate reductase flavoprotein subunit"/>
    <property type="match status" value="1"/>
</dbReference>
<dbReference type="FunFam" id="1.20.58.100:FF:000001">
    <property type="entry name" value="Succinate dehydrogenase flavoprotein subunit (SdhA)"/>
    <property type="match status" value="1"/>
</dbReference>
<dbReference type="Gene3D" id="3.50.50.60">
    <property type="entry name" value="FAD/NAD(P)-binding domain"/>
    <property type="match status" value="1"/>
</dbReference>
<dbReference type="Gene3D" id="1.20.58.100">
    <property type="entry name" value="Fumarate reductase/succinate dehydrogenase flavoprotein-like, C-terminal domain"/>
    <property type="match status" value="1"/>
</dbReference>
<dbReference type="Gene3D" id="4.10.80.40">
    <property type="entry name" value="succinate dehydrogenase protein domain"/>
    <property type="match status" value="1"/>
</dbReference>
<dbReference type="Gene3D" id="3.90.700.10">
    <property type="entry name" value="Succinate dehydrogenase/fumarate reductase flavoprotein, catalytic domain"/>
    <property type="match status" value="1"/>
</dbReference>
<dbReference type="InterPro" id="IPR003953">
    <property type="entry name" value="FAD-dep_OxRdtase_2_FAD-bd"/>
</dbReference>
<dbReference type="InterPro" id="IPR036188">
    <property type="entry name" value="FAD/NAD-bd_sf"/>
</dbReference>
<dbReference type="InterPro" id="IPR003952">
    <property type="entry name" value="FRD_SDH_FAD_BS"/>
</dbReference>
<dbReference type="InterPro" id="IPR037099">
    <property type="entry name" value="Fum_R/Succ_DH_flav-like_C_sf"/>
</dbReference>
<dbReference type="InterPro" id="IPR015939">
    <property type="entry name" value="Fum_Rdtase/Succ_DH_flav-like_C"/>
</dbReference>
<dbReference type="InterPro" id="IPR005884">
    <property type="entry name" value="Fum_red_fp"/>
</dbReference>
<dbReference type="InterPro" id="IPR030664">
    <property type="entry name" value="SdhA/FrdA/AprA"/>
</dbReference>
<dbReference type="InterPro" id="IPR027477">
    <property type="entry name" value="Succ_DH/fumarate_Rdtase_cat_sf"/>
</dbReference>
<dbReference type="InterPro" id="IPR014006">
    <property type="entry name" value="Succ_Dhase_FrdA_Gneg"/>
</dbReference>
<dbReference type="NCBIfam" id="TIGR01176">
    <property type="entry name" value="fum_red_Fp"/>
    <property type="match status" value="1"/>
</dbReference>
<dbReference type="NCBIfam" id="NF006686">
    <property type="entry name" value="PRK09231.1"/>
    <property type="match status" value="1"/>
</dbReference>
<dbReference type="NCBIfam" id="TIGR01812">
    <property type="entry name" value="sdhA_frdA_Gneg"/>
    <property type="match status" value="1"/>
</dbReference>
<dbReference type="PANTHER" id="PTHR11632:SF82">
    <property type="entry name" value="FUMARATE REDUCTASE FLAVOPROTEIN SUBUNIT"/>
    <property type="match status" value="1"/>
</dbReference>
<dbReference type="PANTHER" id="PTHR11632">
    <property type="entry name" value="SUCCINATE DEHYDROGENASE 2 FLAVOPROTEIN SUBUNIT"/>
    <property type="match status" value="1"/>
</dbReference>
<dbReference type="Pfam" id="PF00890">
    <property type="entry name" value="FAD_binding_2"/>
    <property type="match status" value="1"/>
</dbReference>
<dbReference type="Pfam" id="PF02910">
    <property type="entry name" value="Succ_DH_flav_C"/>
    <property type="match status" value="1"/>
</dbReference>
<dbReference type="PIRSF" id="PIRSF000171">
    <property type="entry name" value="SDHA_APRA_LASPO"/>
    <property type="match status" value="1"/>
</dbReference>
<dbReference type="PRINTS" id="PR00368">
    <property type="entry name" value="FADPNR"/>
</dbReference>
<dbReference type="PRINTS" id="PR00411">
    <property type="entry name" value="PNDRDTASEI"/>
</dbReference>
<dbReference type="SUPFAM" id="SSF51905">
    <property type="entry name" value="FAD/NAD(P)-binding domain"/>
    <property type="match status" value="1"/>
</dbReference>
<dbReference type="SUPFAM" id="SSF46977">
    <property type="entry name" value="Succinate dehydrogenase/fumarate reductase flavoprotein C-terminal domain"/>
    <property type="match status" value="1"/>
</dbReference>
<dbReference type="SUPFAM" id="SSF56425">
    <property type="entry name" value="Succinate dehydrogenase/fumarate reductase flavoprotein, catalytic domain"/>
    <property type="match status" value="1"/>
</dbReference>
<dbReference type="PROSITE" id="PS00504">
    <property type="entry name" value="FRD_SDH_FAD_BINDING"/>
    <property type="match status" value="1"/>
</dbReference>
<proteinExistence type="inferred from homology"/>
<feature type="chain" id="PRO_0000158661" description="Fumarate reductase flavoprotein subunit">
    <location>
        <begin position="1"/>
        <end position="599"/>
    </location>
</feature>
<feature type="active site" evidence="1">
    <location>
        <position position="233"/>
    </location>
</feature>
<feature type="active site" evidence="1">
    <location>
        <position position="249"/>
    </location>
</feature>
<feature type="binding site" evidence="1">
    <location>
        <begin position="12"/>
        <end position="16"/>
    </location>
    <ligand>
        <name>FAD</name>
        <dbReference type="ChEBI" id="CHEBI:57692"/>
    </ligand>
</feature>
<feature type="binding site" evidence="1">
    <location>
        <begin position="36"/>
        <end position="38"/>
    </location>
    <ligand>
        <name>FAD</name>
        <dbReference type="ChEBI" id="CHEBI:57692"/>
    </ligand>
</feature>
<feature type="binding site" evidence="1">
    <location>
        <begin position="44"/>
        <end position="52"/>
    </location>
    <ligand>
        <name>FAD</name>
        <dbReference type="ChEBI" id="CHEBI:57692"/>
    </ligand>
</feature>
<feature type="binding site" evidence="1">
    <location>
        <begin position="156"/>
        <end position="158"/>
    </location>
    <ligand>
        <name>FAD</name>
        <dbReference type="ChEBI" id="CHEBI:57692"/>
    </ligand>
</feature>
<feature type="binding site" evidence="1">
    <location>
        <position position="212"/>
    </location>
    <ligand>
        <name>FAD</name>
        <dbReference type="ChEBI" id="CHEBI:57692"/>
    </ligand>
</feature>
<feature type="binding site" evidence="1">
    <location>
        <begin position="357"/>
        <end position="358"/>
    </location>
    <ligand>
        <name>FAD</name>
        <dbReference type="ChEBI" id="CHEBI:57692"/>
    </ligand>
</feature>
<feature type="binding site" evidence="1">
    <location>
        <position position="381"/>
    </location>
    <ligand>
        <name>FAD</name>
        <dbReference type="ChEBI" id="CHEBI:57692"/>
    </ligand>
</feature>
<feature type="binding site" evidence="1">
    <location>
        <begin position="392"/>
        <end position="398"/>
    </location>
    <ligand>
        <name>FAD</name>
        <dbReference type="ChEBI" id="CHEBI:57692"/>
    </ligand>
</feature>
<feature type="modified residue" description="Tele-8alpha-FAD histidine" evidence="1">
    <location>
        <position position="45"/>
    </location>
</feature>
<organism>
    <name type="scientific">Haemophilus influenzae (strain ATCC 51907 / DSM 11121 / KW20 / Rd)</name>
    <dbReference type="NCBI Taxonomy" id="71421"/>
    <lineage>
        <taxon>Bacteria</taxon>
        <taxon>Pseudomonadati</taxon>
        <taxon>Pseudomonadota</taxon>
        <taxon>Gammaproteobacteria</taxon>
        <taxon>Pasteurellales</taxon>
        <taxon>Pasteurellaceae</taxon>
        <taxon>Haemophilus</taxon>
    </lineage>
</organism>
<protein>
    <recommendedName>
        <fullName>Fumarate reductase flavoprotein subunit</fullName>
        <ecNumber evidence="1">1.3.5.1</ecNumber>
    </recommendedName>
    <alternativeName>
        <fullName evidence="2">Quinol-fumarate reductase flavoprotein subunit</fullName>
        <shortName evidence="2">QFR flavoprotein subunit</shortName>
    </alternativeName>
</protein>
<sequence>MQTVNVDIAIVGAGGGGLRAAIAAAEANPNLKIALVSKVYPMRTHTVAAEGGAAAVIKEEDSYDKHFQDTVAGGDWLCEQDVVEYFVQHSPVEMTQLERWGCPWSRKADGDVNVRRFGGMKIERTWFAADKTGFHLLHTLFQTSIQYPQIQRFDEHFVLDILVDDGHARGMVAMNMMEGSLVQINANAVVIATGGGCRAFKFNTNGGIVTGDGLSMAYRHGVPLRDMEFVQYHPTGLPNTGILMTEGCRGEGGILVNKDGYRYLQDYGLGPETPIGKPQNKYMELGPRDKVSQAFWQEWKKGNTLKTAKGVDVVHLDLRHLGEKYLHERLPFICELASAYEGVNPVNEPIPVRPVVHYTMGGIEVDFNSETRIKGLFAVGECASSGLHGANRLGSNSLAELVVLGRVAGEYAAQRAVEAQSVNQSAVDAQAKDVVARLEALHKQEGNESWSEIRDEMGTVMEEGCGIYRDQASMQKAVDKIAELKERYKRIRVSDNSSVFNTDVLYTVELGYILDVAQSIANSAIERKESRGAHQRLDYTERDDVNYLKHTLAFYNENGAPRIEYSPVKITKSQPAKRVYGAEAEAQEAAAKAKEQANG</sequence>